<proteinExistence type="inferred from homology"/>
<organism>
    <name type="scientific">Stutzerimonas stutzeri (strain A1501)</name>
    <name type="common">Pseudomonas stutzeri</name>
    <dbReference type="NCBI Taxonomy" id="379731"/>
    <lineage>
        <taxon>Bacteria</taxon>
        <taxon>Pseudomonadati</taxon>
        <taxon>Pseudomonadota</taxon>
        <taxon>Gammaproteobacteria</taxon>
        <taxon>Pseudomonadales</taxon>
        <taxon>Pseudomonadaceae</taxon>
        <taxon>Stutzerimonas</taxon>
    </lineage>
</organism>
<reference key="1">
    <citation type="journal article" date="2008" name="Proc. Natl. Acad. Sci. U.S.A.">
        <title>Nitrogen fixation island and rhizosphere competence traits in the genome of root-associated Pseudomonas stutzeri A1501.</title>
        <authorList>
            <person name="Yan Y."/>
            <person name="Yang J."/>
            <person name="Dou Y."/>
            <person name="Chen M."/>
            <person name="Ping S."/>
            <person name="Peng J."/>
            <person name="Lu W."/>
            <person name="Zhang W."/>
            <person name="Yao Z."/>
            <person name="Li H."/>
            <person name="Liu W."/>
            <person name="He S."/>
            <person name="Geng L."/>
            <person name="Zhang X."/>
            <person name="Yang F."/>
            <person name="Yu H."/>
            <person name="Zhan Y."/>
            <person name="Li D."/>
            <person name="Lin Z."/>
            <person name="Wang Y."/>
            <person name="Elmerich C."/>
            <person name="Lin M."/>
            <person name="Jin Q."/>
        </authorList>
    </citation>
    <scope>NUCLEOTIDE SEQUENCE [LARGE SCALE GENOMIC DNA]</scope>
    <source>
        <strain>A1501</strain>
    </source>
</reference>
<sequence length="100" mass="11010">MDLSPREKDKLLIFTAGLVAERRLARGVKLNYPEAMAYISAALLEGARDGQTVAELMHYGTTLLSREQVMEGVPEMIPEIQVEATFPDGTKLVTVHQPIA</sequence>
<name>URE3_STUS1</name>
<accession>A4VQU9</accession>
<protein>
    <recommendedName>
        <fullName evidence="1">Urease subunit gamma</fullName>
        <ecNumber evidence="1">3.5.1.5</ecNumber>
    </recommendedName>
    <alternativeName>
        <fullName evidence="1">Urea amidohydrolase subunit gamma</fullName>
    </alternativeName>
</protein>
<comment type="catalytic activity">
    <reaction evidence="1">
        <text>urea + 2 H2O + H(+) = hydrogencarbonate + 2 NH4(+)</text>
        <dbReference type="Rhea" id="RHEA:20557"/>
        <dbReference type="ChEBI" id="CHEBI:15377"/>
        <dbReference type="ChEBI" id="CHEBI:15378"/>
        <dbReference type="ChEBI" id="CHEBI:16199"/>
        <dbReference type="ChEBI" id="CHEBI:17544"/>
        <dbReference type="ChEBI" id="CHEBI:28938"/>
        <dbReference type="EC" id="3.5.1.5"/>
    </reaction>
</comment>
<comment type="pathway">
    <text evidence="1">Nitrogen metabolism; urea degradation; CO(2) and NH(3) from urea (urease route): step 1/1.</text>
</comment>
<comment type="subunit">
    <text evidence="1">Heterotrimer of UreA (gamma), UreB (beta) and UreC (alpha) subunits. Three heterotrimers associate to form the active enzyme.</text>
</comment>
<comment type="subcellular location">
    <subcellularLocation>
        <location evidence="1">Cytoplasm</location>
    </subcellularLocation>
</comment>
<comment type="similarity">
    <text evidence="1">Belongs to the urease gamma subunit family.</text>
</comment>
<dbReference type="EC" id="3.5.1.5" evidence="1"/>
<dbReference type="EMBL" id="CP000304">
    <property type="protein sequence ID" value="ABP81350.1"/>
    <property type="molecule type" value="Genomic_DNA"/>
</dbReference>
<dbReference type="RefSeq" id="WP_003283033.1">
    <property type="nucleotide sequence ID" value="NC_009434.1"/>
</dbReference>
<dbReference type="SMR" id="A4VQU9"/>
<dbReference type="GeneID" id="75212130"/>
<dbReference type="KEGG" id="psa:PST_3727"/>
<dbReference type="eggNOG" id="COG0831">
    <property type="taxonomic scope" value="Bacteria"/>
</dbReference>
<dbReference type="HOGENOM" id="CLU_145825_1_0_6"/>
<dbReference type="UniPathway" id="UPA00258">
    <property type="reaction ID" value="UER00370"/>
</dbReference>
<dbReference type="Proteomes" id="UP000000233">
    <property type="component" value="Chromosome"/>
</dbReference>
<dbReference type="GO" id="GO:0005737">
    <property type="term" value="C:cytoplasm"/>
    <property type="evidence" value="ECO:0007669"/>
    <property type="project" value="UniProtKB-SubCell"/>
</dbReference>
<dbReference type="GO" id="GO:0016151">
    <property type="term" value="F:nickel cation binding"/>
    <property type="evidence" value="ECO:0007669"/>
    <property type="project" value="InterPro"/>
</dbReference>
<dbReference type="GO" id="GO:0009039">
    <property type="term" value="F:urease activity"/>
    <property type="evidence" value="ECO:0007669"/>
    <property type="project" value="UniProtKB-UniRule"/>
</dbReference>
<dbReference type="GO" id="GO:0043419">
    <property type="term" value="P:urea catabolic process"/>
    <property type="evidence" value="ECO:0007669"/>
    <property type="project" value="UniProtKB-UniRule"/>
</dbReference>
<dbReference type="CDD" id="cd00390">
    <property type="entry name" value="Urease_gamma"/>
    <property type="match status" value="1"/>
</dbReference>
<dbReference type="Gene3D" id="3.30.280.10">
    <property type="entry name" value="Urease, gamma-like subunit"/>
    <property type="match status" value="1"/>
</dbReference>
<dbReference type="HAMAP" id="MF_00739">
    <property type="entry name" value="Urease_gamma"/>
    <property type="match status" value="1"/>
</dbReference>
<dbReference type="InterPro" id="IPR012010">
    <property type="entry name" value="Urease_gamma"/>
</dbReference>
<dbReference type="InterPro" id="IPR002026">
    <property type="entry name" value="Urease_gamma/gamma-beta_su"/>
</dbReference>
<dbReference type="InterPro" id="IPR036463">
    <property type="entry name" value="Urease_gamma_sf"/>
</dbReference>
<dbReference type="InterPro" id="IPR050069">
    <property type="entry name" value="Urease_subunit"/>
</dbReference>
<dbReference type="NCBIfam" id="NF009712">
    <property type="entry name" value="PRK13241.1"/>
    <property type="match status" value="1"/>
</dbReference>
<dbReference type="NCBIfam" id="TIGR00193">
    <property type="entry name" value="urease_gam"/>
    <property type="match status" value="1"/>
</dbReference>
<dbReference type="PANTHER" id="PTHR33569">
    <property type="entry name" value="UREASE"/>
    <property type="match status" value="1"/>
</dbReference>
<dbReference type="PANTHER" id="PTHR33569:SF1">
    <property type="entry name" value="UREASE"/>
    <property type="match status" value="1"/>
</dbReference>
<dbReference type="Pfam" id="PF00547">
    <property type="entry name" value="Urease_gamma"/>
    <property type="match status" value="1"/>
</dbReference>
<dbReference type="PIRSF" id="PIRSF001223">
    <property type="entry name" value="Urease_gamma"/>
    <property type="match status" value="1"/>
</dbReference>
<dbReference type="SUPFAM" id="SSF54111">
    <property type="entry name" value="Urease, gamma-subunit"/>
    <property type="match status" value="1"/>
</dbReference>
<feature type="chain" id="PRO_1000046357" description="Urease subunit gamma">
    <location>
        <begin position="1"/>
        <end position="100"/>
    </location>
</feature>
<keyword id="KW-0963">Cytoplasm</keyword>
<keyword id="KW-0378">Hydrolase</keyword>
<keyword id="KW-1185">Reference proteome</keyword>
<gene>
    <name evidence="1" type="primary">ureA</name>
    <name type="ordered locus">PST_3727</name>
</gene>
<evidence type="ECO:0000255" key="1">
    <source>
        <dbReference type="HAMAP-Rule" id="MF_00739"/>
    </source>
</evidence>